<keyword id="KW-0489">Methyltransferase</keyword>
<keyword id="KW-1185">Reference proteome</keyword>
<keyword id="KW-0949">S-adenosyl-L-methionine</keyword>
<keyword id="KW-0808">Transferase</keyword>
<evidence type="ECO:0000255" key="1">
    <source>
        <dbReference type="HAMAP-Rule" id="MF_02126"/>
    </source>
</evidence>
<dbReference type="EC" id="2.1.1.297" evidence="1"/>
<dbReference type="EMBL" id="AE017126">
    <property type="protein sequence ID" value="AAP99405.1"/>
    <property type="molecule type" value="Genomic_DNA"/>
</dbReference>
<dbReference type="RefSeq" id="NP_874753.1">
    <property type="nucleotide sequence ID" value="NC_005042.1"/>
</dbReference>
<dbReference type="RefSeq" id="WP_011124514.1">
    <property type="nucleotide sequence ID" value="NC_005042.1"/>
</dbReference>
<dbReference type="SMR" id="Q7VDL7"/>
<dbReference type="STRING" id="167539.Pro_0359"/>
<dbReference type="EnsemblBacteria" id="AAP99405">
    <property type="protein sequence ID" value="AAP99405"/>
    <property type="gene ID" value="Pro_0359"/>
</dbReference>
<dbReference type="KEGG" id="pma:Pro_0359"/>
<dbReference type="PATRIC" id="fig|167539.5.peg.367"/>
<dbReference type="eggNOG" id="COG2890">
    <property type="taxonomic scope" value="Bacteria"/>
</dbReference>
<dbReference type="HOGENOM" id="CLU_018398_3_1_3"/>
<dbReference type="OrthoDB" id="9800643at2"/>
<dbReference type="Proteomes" id="UP000001420">
    <property type="component" value="Chromosome"/>
</dbReference>
<dbReference type="GO" id="GO:0003676">
    <property type="term" value="F:nucleic acid binding"/>
    <property type="evidence" value="ECO:0007669"/>
    <property type="project" value="InterPro"/>
</dbReference>
<dbReference type="GO" id="GO:0102559">
    <property type="term" value="F:protein-(glutamine-N5) methyltransferase activity"/>
    <property type="evidence" value="ECO:0007669"/>
    <property type="project" value="UniProtKB-EC"/>
</dbReference>
<dbReference type="GO" id="GO:0036009">
    <property type="term" value="F:protein-glutamine N-methyltransferase activity"/>
    <property type="evidence" value="ECO:0007669"/>
    <property type="project" value="UniProtKB-UniRule"/>
</dbReference>
<dbReference type="GO" id="GO:0032259">
    <property type="term" value="P:methylation"/>
    <property type="evidence" value="ECO:0007669"/>
    <property type="project" value="UniProtKB-KW"/>
</dbReference>
<dbReference type="Gene3D" id="3.40.50.150">
    <property type="entry name" value="Vaccinia Virus protein VP39"/>
    <property type="match status" value="1"/>
</dbReference>
<dbReference type="HAMAP" id="MF_02126">
    <property type="entry name" value="RF_methyltr_PrmC"/>
    <property type="match status" value="1"/>
</dbReference>
<dbReference type="InterPro" id="IPR002052">
    <property type="entry name" value="DNA_methylase_N6_adenine_CS"/>
</dbReference>
<dbReference type="InterPro" id="IPR004556">
    <property type="entry name" value="HemK-like"/>
</dbReference>
<dbReference type="InterPro" id="IPR052663">
    <property type="entry name" value="RF_glutamine_MTase_cyano"/>
</dbReference>
<dbReference type="InterPro" id="IPR019874">
    <property type="entry name" value="RF_methyltr_PrmC"/>
</dbReference>
<dbReference type="InterPro" id="IPR029063">
    <property type="entry name" value="SAM-dependent_MTases_sf"/>
</dbReference>
<dbReference type="InterPro" id="IPR007848">
    <property type="entry name" value="Small_mtfrase_dom"/>
</dbReference>
<dbReference type="NCBIfam" id="TIGR00536">
    <property type="entry name" value="hemK_fam"/>
    <property type="match status" value="1"/>
</dbReference>
<dbReference type="NCBIfam" id="TIGR03534">
    <property type="entry name" value="RF_mod_PrmC"/>
    <property type="match status" value="1"/>
</dbReference>
<dbReference type="PANTHER" id="PTHR47441">
    <property type="match status" value="1"/>
</dbReference>
<dbReference type="PANTHER" id="PTHR47441:SF3">
    <property type="entry name" value="RELEASE FACTOR GLUTAMINE METHYLTRANSFERASE"/>
    <property type="match status" value="1"/>
</dbReference>
<dbReference type="Pfam" id="PF05175">
    <property type="entry name" value="MTS"/>
    <property type="match status" value="1"/>
</dbReference>
<dbReference type="SUPFAM" id="SSF53335">
    <property type="entry name" value="S-adenosyl-L-methionine-dependent methyltransferases"/>
    <property type="match status" value="1"/>
</dbReference>
<name>PRMC_PROMA</name>
<proteinExistence type="inferred from homology"/>
<gene>
    <name evidence="1" type="primary">prmC</name>
    <name type="synonym">hemK</name>
    <name type="ordered locus">Pro_0359</name>
</gene>
<feature type="chain" id="PRO_0000414535" description="Release factor glutamine methyltransferase">
    <location>
        <begin position="1"/>
        <end position="293"/>
    </location>
</feature>
<feature type="binding site" evidence="1">
    <location>
        <begin position="130"/>
        <end position="134"/>
    </location>
    <ligand>
        <name>S-adenosyl-L-methionine</name>
        <dbReference type="ChEBI" id="CHEBI:59789"/>
    </ligand>
</feature>
<feature type="binding site" evidence="1">
    <location>
        <position position="153"/>
    </location>
    <ligand>
        <name>S-adenosyl-L-methionine</name>
        <dbReference type="ChEBI" id="CHEBI:59789"/>
    </ligand>
</feature>
<feature type="binding site" evidence="1">
    <location>
        <position position="182"/>
    </location>
    <ligand>
        <name>S-adenosyl-L-methionine</name>
        <dbReference type="ChEBI" id="CHEBI:59789"/>
    </ligand>
</feature>
<feature type="binding site" evidence="1">
    <location>
        <begin position="199"/>
        <end position="202"/>
    </location>
    <ligand>
        <name>substrate</name>
    </ligand>
</feature>
<feature type="binding site" evidence="1">
    <location>
        <position position="199"/>
    </location>
    <ligand>
        <name>S-adenosyl-L-methionine</name>
        <dbReference type="ChEBI" id="CHEBI:59789"/>
    </ligand>
</feature>
<comment type="function">
    <text evidence="1">Methylates the class 1 translation termination release factors RF1/PrfA and RF2/PrfB on the glutamine residue of the universally conserved GGQ motif.</text>
</comment>
<comment type="catalytic activity">
    <reaction evidence="1">
        <text>L-glutaminyl-[peptide chain release factor] + S-adenosyl-L-methionine = N(5)-methyl-L-glutaminyl-[peptide chain release factor] + S-adenosyl-L-homocysteine + H(+)</text>
        <dbReference type="Rhea" id="RHEA:42896"/>
        <dbReference type="Rhea" id="RHEA-COMP:10271"/>
        <dbReference type="Rhea" id="RHEA-COMP:10272"/>
        <dbReference type="ChEBI" id="CHEBI:15378"/>
        <dbReference type="ChEBI" id="CHEBI:30011"/>
        <dbReference type="ChEBI" id="CHEBI:57856"/>
        <dbReference type="ChEBI" id="CHEBI:59789"/>
        <dbReference type="ChEBI" id="CHEBI:61891"/>
        <dbReference type="EC" id="2.1.1.297"/>
    </reaction>
</comment>
<comment type="similarity">
    <text evidence="1">Belongs to the protein N5-glutamine methyltransferase family. PrmC subfamily.</text>
</comment>
<sequence length="293" mass="32794">MSFERFFSAEEILIWRKQELSKGGRAVDLDWLLDIGGGLGWSTLQELKIFQSSFHKLDLSLEELSLIWMRHLSDQIPLQHLVGKCPWRDFELKVNSSALIPRQETEILIDIALKKVDAGLMKYGRWADLGTGSGALAVALARALPLWEGHAADCCNDALALAESNINTLTENANVSLHLGDWWEPLKPWWGNFDLVVANPPYIPKTHLSELDPVVRDHEPILALSGGDDGMDSCRKVIKGAMKGLRSGGWLLLEHNFDQSEQALNLMVDSGFLEVDFENDLEGVRRFGLALRP</sequence>
<reference key="1">
    <citation type="journal article" date="2003" name="Proc. Natl. Acad. Sci. U.S.A.">
        <title>Genome sequence of the cyanobacterium Prochlorococcus marinus SS120, a nearly minimal oxyphototrophic genome.</title>
        <authorList>
            <person name="Dufresne A."/>
            <person name="Salanoubat M."/>
            <person name="Partensky F."/>
            <person name="Artiguenave F."/>
            <person name="Axmann I.M."/>
            <person name="Barbe V."/>
            <person name="Duprat S."/>
            <person name="Galperin M.Y."/>
            <person name="Koonin E.V."/>
            <person name="Le Gall F."/>
            <person name="Makarova K.S."/>
            <person name="Ostrowski M."/>
            <person name="Oztas S."/>
            <person name="Robert C."/>
            <person name="Rogozin I.B."/>
            <person name="Scanlan D.J."/>
            <person name="Tandeau de Marsac N."/>
            <person name="Weissenbach J."/>
            <person name="Wincker P."/>
            <person name="Wolf Y.I."/>
            <person name="Hess W.R."/>
        </authorList>
    </citation>
    <scope>NUCLEOTIDE SEQUENCE [LARGE SCALE GENOMIC DNA]</scope>
    <source>
        <strain>SARG / CCMP1375 / SS120</strain>
    </source>
</reference>
<protein>
    <recommendedName>
        <fullName evidence="1">Release factor glutamine methyltransferase</fullName>
        <shortName evidence="1">RF MTase</shortName>
        <ecNumber evidence="1">2.1.1.297</ecNumber>
    </recommendedName>
    <alternativeName>
        <fullName evidence="1">N5-glutamine methyltransferase PrmC</fullName>
    </alternativeName>
    <alternativeName>
        <fullName evidence="1">Protein-(glutamine-N5) MTase PrmC</fullName>
    </alternativeName>
    <alternativeName>
        <fullName evidence="1">Protein-glutamine N-methyltransferase PrmC</fullName>
    </alternativeName>
</protein>
<organism>
    <name type="scientific">Prochlorococcus marinus (strain SARG / CCMP1375 / SS120)</name>
    <dbReference type="NCBI Taxonomy" id="167539"/>
    <lineage>
        <taxon>Bacteria</taxon>
        <taxon>Bacillati</taxon>
        <taxon>Cyanobacteriota</taxon>
        <taxon>Cyanophyceae</taxon>
        <taxon>Synechococcales</taxon>
        <taxon>Prochlorococcaceae</taxon>
        <taxon>Prochlorococcus</taxon>
    </lineage>
</organism>
<accession>Q7VDL7</accession>